<feature type="chain" id="PRO_1000199663" description="Ubiquinone biosynthesis O-methyltransferase">
    <location>
        <begin position="1"/>
        <end position="237"/>
    </location>
</feature>
<feature type="binding site" evidence="1">
    <location>
        <position position="38"/>
    </location>
    <ligand>
        <name>S-adenosyl-L-methionine</name>
        <dbReference type="ChEBI" id="CHEBI:59789"/>
    </ligand>
</feature>
<feature type="binding site" evidence="1">
    <location>
        <position position="58"/>
    </location>
    <ligand>
        <name>S-adenosyl-L-methionine</name>
        <dbReference type="ChEBI" id="CHEBI:59789"/>
    </ligand>
</feature>
<feature type="binding site" evidence="1">
    <location>
        <position position="79"/>
    </location>
    <ligand>
        <name>S-adenosyl-L-methionine</name>
        <dbReference type="ChEBI" id="CHEBI:59789"/>
    </ligand>
</feature>
<feature type="binding site" evidence="1">
    <location>
        <position position="124"/>
    </location>
    <ligand>
        <name>S-adenosyl-L-methionine</name>
        <dbReference type="ChEBI" id="CHEBI:59789"/>
    </ligand>
</feature>
<dbReference type="EC" id="2.1.1.222" evidence="1"/>
<dbReference type="EC" id="2.1.1.64" evidence="1"/>
<dbReference type="EMBL" id="CP001172">
    <property type="protein sequence ID" value="ACJ59431.1"/>
    <property type="molecule type" value="Genomic_DNA"/>
</dbReference>
<dbReference type="RefSeq" id="WP_000080759.1">
    <property type="nucleotide sequence ID" value="NZ_CP001172.1"/>
</dbReference>
<dbReference type="SMR" id="B7H2Y9"/>
<dbReference type="GeneID" id="92891998"/>
<dbReference type="HOGENOM" id="CLU_042432_5_0_6"/>
<dbReference type="UniPathway" id="UPA00232"/>
<dbReference type="Proteomes" id="UP000006924">
    <property type="component" value="Chromosome"/>
</dbReference>
<dbReference type="GO" id="GO:0102208">
    <property type="term" value="F:2-polyprenyl-6-hydroxyphenol methylase activity"/>
    <property type="evidence" value="ECO:0007669"/>
    <property type="project" value="UniProtKB-EC"/>
</dbReference>
<dbReference type="GO" id="GO:0061542">
    <property type="term" value="F:3-demethylubiquinol 3-O-methyltransferase activity"/>
    <property type="evidence" value="ECO:0007669"/>
    <property type="project" value="UniProtKB-UniRule"/>
</dbReference>
<dbReference type="GO" id="GO:0010420">
    <property type="term" value="F:polyprenyldihydroxybenzoate methyltransferase activity"/>
    <property type="evidence" value="ECO:0007669"/>
    <property type="project" value="InterPro"/>
</dbReference>
<dbReference type="GO" id="GO:0032259">
    <property type="term" value="P:methylation"/>
    <property type="evidence" value="ECO:0007669"/>
    <property type="project" value="UniProtKB-KW"/>
</dbReference>
<dbReference type="CDD" id="cd02440">
    <property type="entry name" value="AdoMet_MTases"/>
    <property type="match status" value="1"/>
</dbReference>
<dbReference type="FunFam" id="3.40.50.150:FF:000028">
    <property type="entry name" value="Ubiquinone biosynthesis O-methyltransferase"/>
    <property type="match status" value="1"/>
</dbReference>
<dbReference type="Gene3D" id="3.40.50.150">
    <property type="entry name" value="Vaccinia Virus protein VP39"/>
    <property type="match status" value="1"/>
</dbReference>
<dbReference type="HAMAP" id="MF_00472">
    <property type="entry name" value="UbiG"/>
    <property type="match status" value="1"/>
</dbReference>
<dbReference type="InterPro" id="IPR029063">
    <property type="entry name" value="SAM-dependent_MTases_sf"/>
</dbReference>
<dbReference type="InterPro" id="IPR010233">
    <property type="entry name" value="UbiG_MeTrfase"/>
</dbReference>
<dbReference type="NCBIfam" id="TIGR01983">
    <property type="entry name" value="UbiG"/>
    <property type="match status" value="1"/>
</dbReference>
<dbReference type="PANTHER" id="PTHR43464">
    <property type="entry name" value="METHYLTRANSFERASE"/>
    <property type="match status" value="1"/>
</dbReference>
<dbReference type="PANTHER" id="PTHR43464:SF19">
    <property type="entry name" value="UBIQUINONE BIOSYNTHESIS O-METHYLTRANSFERASE, MITOCHONDRIAL"/>
    <property type="match status" value="1"/>
</dbReference>
<dbReference type="Pfam" id="PF13489">
    <property type="entry name" value="Methyltransf_23"/>
    <property type="match status" value="1"/>
</dbReference>
<dbReference type="SUPFAM" id="SSF53335">
    <property type="entry name" value="S-adenosyl-L-methionine-dependent methyltransferases"/>
    <property type="match status" value="1"/>
</dbReference>
<gene>
    <name evidence="1" type="primary">ubiG</name>
    <name type="ordered locus">ABBFA_003475</name>
</gene>
<organism>
    <name type="scientific">Acinetobacter baumannii (strain AB307-0294)</name>
    <dbReference type="NCBI Taxonomy" id="557600"/>
    <lineage>
        <taxon>Bacteria</taxon>
        <taxon>Pseudomonadati</taxon>
        <taxon>Pseudomonadota</taxon>
        <taxon>Gammaproteobacteria</taxon>
        <taxon>Moraxellales</taxon>
        <taxon>Moraxellaceae</taxon>
        <taxon>Acinetobacter</taxon>
        <taxon>Acinetobacter calcoaceticus/baumannii complex</taxon>
    </lineage>
</organism>
<name>UBIG_ACIB3</name>
<evidence type="ECO:0000255" key="1">
    <source>
        <dbReference type="HAMAP-Rule" id="MF_00472"/>
    </source>
</evidence>
<reference key="1">
    <citation type="journal article" date="2008" name="J. Bacteriol.">
        <title>Comparative genome sequence analysis of multidrug-resistant Acinetobacter baumannii.</title>
        <authorList>
            <person name="Adams M.D."/>
            <person name="Goglin K."/>
            <person name="Molyneaux N."/>
            <person name="Hujer K.M."/>
            <person name="Lavender H."/>
            <person name="Jamison J.J."/>
            <person name="MacDonald I.J."/>
            <person name="Martin K.M."/>
            <person name="Russo T."/>
            <person name="Campagnari A.A."/>
            <person name="Hujer A.M."/>
            <person name="Bonomo R.A."/>
            <person name="Gill S.R."/>
        </authorList>
    </citation>
    <scope>NUCLEOTIDE SEQUENCE [LARGE SCALE GENOMIC DNA]</scope>
    <source>
        <strain>AB307-0294</strain>
    </source>
</reference>
<protein>
    <recommendedName>
        <fullName evidence="1">Ubiquinone biosynthesis O-methyltransferase</fullName>
    </recommendedName>
    <alternativeName>
        <fullName evidence="1">2-polyprenyl-6-hydroxyphenol methylase</fullName>
        <ecNumber evidence="1">2.1.1.222</ecNumber>
    </alternativeName>
    <alternativeName>
        <fullName evidence="1">3-demethylubiquinone 3-O-methyltransferase</fullName>
        <ecNumber evidence="1">2.1.1.64</ecNumber>
    </alternativeName>
</protein>
<proteinExistence type="inferred from homology"/>
<sequence>MSQLNVDLQEIAKFEALAAKWWDQHSEFRPLHQINPLRLNWIDERAGGLAGKKVLDVGCGGGILAESMARRGADVLGIDMGEAPLAVGRLHAQQENVQNIEYRQIPVEELAQEQAGQYDVVTCMEMMEHVPDPASIVKACQTLVKPGGHVFFSTINRNPKSYLFAIIGAEYVLRMLPKGTHDYHKFIRPSEMAHDIRNAGLTLKEMTGLHYNPITKRYWLAPNVDVNYMVHTVKTGA</sequence>
<accession>B7H2Y9</accession>
<comment type="function">
    <text evidence="1">O-methyltransferase that catalyzes the 2 O-methylation steps in the ubiquinone biosynthetic pathway.</text>
</comment>
<comment type="catalytic activity">
    <reaction evidence="1">
        <text>a 3-demethylubiquinol + S-adenosyl-L-methionine = a ubiquinol + S-adenosyl-L-homocysteine + H(+)</text>
        <dbReference type="Rhea" id="RHEA:44380"/>
        <dbReference type="Rhea" id="RHEA-COMP:9566"/>
        <dbReference type="Rhea" id="RHEA-COMP:10914"/>
        <dbReference type="ChEBI" id="CHEBI:15378"/>
        <dbReference type="ChEBI" id="CHEBI:17976"/>
        <dbReference type="ChEBI" id="CHEBI:57856"/>
        <dbReference type="ChEBI" id="CHEBI:59789"/>
        <dbReference type="ChEBI" id="CHEBI:84422"/>
        <dbReference type="EC" id="2.1.1.64"/>
    </reaction>
</comment>
<comment type="catalytic activity">
    <reaction evidence="1">
        <text>a 3-(all-trans-polyprenyl)benzene-1,2-diol + S-adenosyl-L-methionine = a 2-methoxy-6-(all-trans-polyprenyl)phenol + S-adenosyl-L-homocysteine + H(+)</text>
        <dbReference type="Rhea" id="RHEA:31411"/>
        <dbReference type="Rhea" id="RHEA-COMP:9550"/>
        <dbReference type="Rhea" id="RHEA-COMP:9551"/>
        <dbReference type="ChEBI" id="CHEBI:15378"/>
        <dbReference type="ChEBI" id="CHEBI:57856"/>
        <dbReference type="ChEBI" id="CHEBI:59789"/>
        <dbReference type="ChEBI" id="CHEBI:62729"/>
        <dbReference type="ChEBI" id="CHEBI:62731"/>
        <dbReference type="EC" id="2.1.1.222"/>
    </reaction>
</comment>
<comment type="pathway">
    <text evidence="1">Cofactor biosynthesis; ubiquinone biosynthesis.</text>
</comment>
<comment type="similarity">
    <text evidence="1">Belongs to the methyltransferase superfamily. UbiG/COQ3 family.</text>
</comment>
<keyword id="KW-0489">Methyltransferase</keyword>
<keyword id="KW-0949">S-adenosyl-L-methionine</keyword>
<keyword id="KW-0808">Transferase</keyword>
<keyword id="KW-0831">Ubiquinone biosynthesis</keyword>